<protein>
    <recommendedName>
        <fullName>Peptidyl-prolyl cis-trans isomerase CYP21-2</fullName>
        <shortName>PPIase CYP21-2</shortName>
        <ecNumber>5.2.1.8</ecNumber>
    </recommendedName>
    <alternativeName>
        <fullName>Cyclophilin of 21 kDa 2</fullName>
    </alternativeName>
    <alternativeName>
        <fullName>Cyclophilin-21-2</fullName>
    </alternativeName>
</protein>
<evidence type="ECO:0000250" key="1"/>
<evidence type="ECO:0000255" key="2"/>
<evidence type="ECO:0000255" key="3">
    <source>
        <dbReference type="PROSITE-ProRule" id="PRU00156"/>
    </source>
</evidence>
<evidence type="ECO:0000269" key="4">
    <source>
    </source>
</evidence>
<evidence type="ECO:0000303" key="5">
    <source ref="4"/>
</evidence>
<evidence type="ECO:0000305" key="6"/>
<dbReference type="EC" id="5.2.1.8"/>
<dbReference type="EMBL" id="AY568519">
    <property type="protein sequence ID" value="AAS75302.1"/>
    <property type="molecule type" value="mRNA"/>
</dbReference>
<dbReference type="EMBL" id="AL163832">
    <property type="protein sequence ID" value="CAB87846.1"/>
    <property type="status" value="ALT_SEQ"/>
    <property type="molecule type" value="Genomic_DNA"/>
</dbReference>
<dbReference type="EMBL" id="CP002686">
    <property type="protein sequence ID" value="AEE79457.1"/>
    <property type="molecule type" value="Genomic_DNA"/>
</dbReference>
<dbReference type="EMBL" id="AK176511">
    <property type="protein sequence ID" value="BAD44274.1"/>
    <property type="molecule type" value="mRNA"/>
</dbReference>
<dbReference type="EMBL" id="AY088764">
    <property type="protein sequence ID" value="AAM67079.1"/>
    <property type="molecule type" value="mRNA"/>
</dbReference>
<dbReference type="PIR" id="T49204">
    <property type="entry name" value="T49204"/>
</dbReference>
<dbReference type="RefSeq" id="NP_567029.1">
    <molecule id="Q8L8W5-1"/>
    <property type="nucleotide sequence ID" value="NM_115450.4"/>
</dbReference>
<dbReference type="SMR" id="Q8L8W5"/>
<dbReference type="FunCoup" id="Q8L8W5">
    <property type="interactions" value="696"/>
</dbReference>
<dbReference type="STRING" id="3702.Q8L8W5"/>
<dbReference type="GlyCosmos" id="Q8L8W5">
    <property type="glycosylation" value="1 site, No reported glycans"/>
</dbReference>
<dbReference type="GlyGen" id="Q8L8W5">
    <property type="glycosylation" value="1 site"/>
</dbReference>
<dbReference type="PaxDb" id="3702-AT3G55920.1"/>
<dbReference type="ProteomicsDB" id="224491">
    <molecule id="Q8L8W5-1"/>
</dbReference>
<dbReference type="EnsemblPlants" id="AT3G55920.1">
    <molecule id="Q8L8W5-1"/>
    <property type="protein sequence ID" value="AT3G55920.1"/>
    <property type="gene ID" value="AT3G55920"/>
</dbReference>
<dbReference type="GeneID" id="824758"/>
<dbReference type="Gramene" id="AT3G55920.1">
    <molecule id="Q8L8W5-1"/>
    <property type="protein sequence ID" value="AT3G55920.1"/>
    <property type="gene ID" value="AT3G55920"/>
</dbReference>
<dbReference type="KEGG" id="ath:AT3G55920"/>
<dbReference type="Araport" id="AT3G55920"/>
<dbReference type="TAIR" id="AT3G55920">
    <property type="gene designation" value="CYP21-2"/>
</dbReference>
<dbReference type="eggNOG" id="KOG0865">
    <property type="taxonomic scope" value="Eukaryota"/>
</dbReference>
<dbReference type="HOGENOM" id="CLU_012062_4_3_1"/>
<dbReference type="InParanoid" id="Q8L8W5"/>
<dbReference type="OMA" id="GHIPVEN"/>
<dbReference type="OrthoDB" id="193499at2759"/>
<dbReference type="PhylomeDB" id="Q8L8W5"/>
<dbReference type="PRO" id="PR:Q8L8W5"/>
<dbReference type="Proteomes" id="UP000006548">
    <property type="component" value="Chromosome 3"/>
</dbReference>
<dbReference type="ExpressionAtlas" id="Q8L8W5">
    <property type="expression patterns" value="baseline and differential"/>
</dbReference>
<dbReference type="GO" id="GO:0005783">
    <property type="term" value="C:endoplasmic reticulum"/>
    <property type="evidence" value="ECO:0007669"/>
    <property type="project" value="UniProtKB-SubCell"/>
</dbReference>
<dbReference type="GO" id="GO:0005768">
    <property type="term" value="C:endosome"/>
    <property type="evidence" value="ECO:0007005"/>
    <property type="project" value="TAIR"/>
</dbReference>
<dbReference type="GO" id="GO:0005794">
    <property type="term" value="C:Golgi apparatus"/>
    <property type="evidence" value="ECO:0007005"/>
    <property type="project" value="TAIR"/>
</dbReference>
<dbReference type="GO" id="GO:0005797">
    <property type="term" value="C:Golgi medial cisterna"/>
    <property type="evidence" value="ECO:0007005"/>
    <property type="project" value="TAIR"/>
</dbReference>
<dbReference type="GO" id="GO:0005886">
    <property type="term" value="C:plasma membrane"/>
    <property type="evidence" value="ECO:0007005"/>
    <property type="project" value="TAIR"/>
</dbReference>
<dbReference type="GO" id="GO:0005802">
    <property type="term" value="C:trans-Golgi network"/>
    <property type="evidence" value="ECO:0007005"/>
    <property type="project" value="TAIR"/>
</dbReference>
<dbReference type="GO" id="GO:0003755">
    <property type="term" value="F:peptidyl-prolyl cis-trans isomerase activity"/>
    <property type="evidence" value="ECO:0007669"/>
    <property type="project" value="UniProtKB-KW"/>
</dbReference>
<dbReference type="GO" id="GO:0006457">
    <property type="term" value="P:protein folding"/>
    <property type="evidence" value="ECO:0007669"/>
    <property type="project" value="InterPro"/>
</dbReference>
<dbReference type="CDD" id="cd01926">
    <property type="entry name" value="cyclophilin_ABH_like"/>
    <property type="match status" value="1"/>
</dbReference>
<dbReference type="FunFam" id="2.40.100.10:FF:000002">
    <property type="entry name" value="Peptidyl-prolyl cis-trans isomerase"/>
    <property type="match status" value="1"/>
</dbReference>
<dbReference type="Gene3D" id="2.40.100.10">
    <property type="entry name" value="Cyclophilin-like"/>
    <property type="match status" value="1"/>
</dbReference>
<dbReference type="InterPro" id="IPR029000">
    <property type="entry name" value="Cyclophilin-like_dom_sf"/>
</dbReference>
<dbReference type="InterPro" id="IPR020892">
    <property type="entry name" value="Cyclophilin-type_PPIase_CS"/>
</dbReference>
<dbReference type="InterPro" id="IPR002130">
    <property type="entry name" value="Cyclophilin-type_PPIase_dom"/>
</dbReference>
<dbReference type="PANTHER" id="PTHR11071">
    <property type="entry name" value="PEPTIDYL-PROLYL CIS-TRANS ISOMERASE"/>
    <property type="match status" value="1"/>
</dbReference>
<dbReference type="PANTHER" id="PTHR11071:SF467">
    <property type="entry name" value="PEPTIDYL-PROLYL CIS-TRANS ISOMERASE CYP21-2"/>
    <property type="match status" value="1"/>
</dbReference>
<dbReference type="Pfam" id="PF00160">
    <property type="entry name" value="Pro_isomerase"/>
    <property type="match status" value="1"/>
</dbReference>
<dbReference type="PRINTS" id="PR00153">
    <property type="entry name" value="CSAPPISMRASE"/>
</dbReference>
<dbReference type="SUPFAM" id="SSF50891">
    <property type="entry name" value="Cyclophilin-like"/>
    <property type="match status" value="1"/>
</dbReference>
<dbReference type="PROSITE" id="PS00170">
    <property type="entry name" value="CSA_PPIASE_1"/>
    <property type="match status" value="1"/>
</dbReference>
<dbReference type="PROSITE" id="PS50072">
    <property type="entry name" value="CSA_PPIASE_2"/>
    <property type="match status" value="1"/>
</dbReference>
<feature type="signal peptide" evidence="2">
    <location>
        <begin position="1"/>
        <end position="24"/>
    </location>
</feature>
<feature type="chain" id="PRO_0000429935" description="Peptidyl-prolyl cis-trans isomerase CYP21-2">
    <location>
        <begin position="25"/>
        <end position="228"/>
    </location>
</feature>
<feature type="domain" description="PPIase cyclophilin-type" evidence="3">
    <location>
        <begin position="62"/>
        <end position="225"/>
    </location>
</feature>
<feature type="glycosylation site" description="N-linked (GlcNAc...) asparagine" evidence="2">
    <location>
        <position position="170"/>
    </location>
</feature>
<feature type="splice variant" id="VSP_055388" description="In isoform 2." evidence="5">
    <location>
        <begin position="1"/>
        <end position="103"/>
    </location>
</feature>
<organism>
    <name type="scientific">Arabidopsis thaliana</name>
    <name type="common">Mouse-ear cress</name>
    <dbReference type="NCBI Taxonomy" id="3702"/>
    <lineage>
        <taxon>Eukaryota</taxon>
        <taxon>Viridiplantae</taxon>
        <taxon>Streptophyta</taxon>
        <taxon>Embryophyta</taxon>
        <taxon>Tracheophyta</taxon>
        <taxon>Spermatophyta</taxon>
        <taxon>Magnoliopsida</taxon>
        <taxon>eudicotyledons</taxon>
        <taxon>Gunneridae</taxon>
        <taxon>Pentapetalae</taxon>
        <taxon>rosids</taxon>
        <taxon>malvids</taxon>
        <taxon>Brassicales</taxon>
        <taxon>Brassicaceae</taxon>
        <taxon>Camelineae</taxon>
        <taxon>Arabidopsis</taxon>
    </lineage>
</organism>
<sequence>MAITATRLVSLTLLWIVVLFVTLALIQIKLTDVADPSVNEKILDAKLNQVGEDLEGVTHKVYFDIQINGSPAGRILIGLFGNIVPKTAENFRSLCTGEKGVGNMGKPLYFKGSSFHRIIPGFMIQGGDFTRGDGRGGESIYGDKFADENFKLKHTGPGFLSMANSGPDSNGSQFFITTVTTSWLDGHHVVFGKVLSGMEVVRKIEAQGQDSGVPKANVIIFASGEVSL</sequence>
<accession>Q8L8W5</accession>
<accession>Q67YF7</accession>
<accession>Q9LY53</accession>
<comment type="function">
    <text evidence="1">PPIases accelerate the folding of proteins. It catalyzes the cis-trans isomerization of proline imidic peptide bonds in oligopeptides (By similarity).</text>
</comment>
<comment type="catalytic activity">
    <reaction>
        <text>[protein]-peptidylproline (omega=180) = [protein]-peptidylproline (omega=0)</text>
        <dbReference type="Rhea" id="RHEA:16237"/>
        <dbReference type="Rhea" id="RHEA-COMP:10747"/>
        <dbReference type="Rhea" id="RHEA-COMP:10748"/>
        <dbReference type="ChEBI" id="CHEBI:83833"/>
        <dbReference type="ChEBI" id="CHEBI:83834"/>
        <dbReference type="EC" id="5.2.1.8"/>
    </reaction>
</comment>
<comment type="subcellular location">
    <subcellularLocation>
        <location evidence="1">Endoplasmic reticulum</location>
    </subcellularLocation>
</comment>
<comment type="alternative products">
    <event type="alternative splicing"/>
    <isoform>
        <id>Q8L8W5-1</id>
        <name>1</name>
        <sequence type="displayed"/>
    </isoform>
    <isoform>
        <id>Q8L8W5-2</id>
        <name>2</name>
        <sequence type="described" ref="VSP_055388"/>
    </isoform>
</comment>
<comment type="tissue specificity">
    <text evidence="4">Expressed in leaves, flowers, roots and stems.</text>
</comment>
<comment type="similarity">
    <text evidence="6">Belongs to the cyclophilin-type PPIase family.</text>
</comment>
<comment type="sequence caution" evidence="6">
    <conflict type="erroneous gene model prediction">
        <sequence resource="EMBL-CDS" id="CAB87846"/>
    </conflict>
</comment>
<proteinExistence type="evidence at transcript level"/>
<reference key="1">
    <citation type="journal article" date="2004" name="Plant Physiol.">
        <title>The Arabidopsis cyclophilin gene family.</title>
        <authorList>
            <person name="Romano P.G.N."/>
            <person name="Horton P."/>
            <person name="Gray J.E."/>
        </authorList>
    </citation>
    <scope>NUCLEOTIDE SEQUENCE [MRNA] (ISOFORM 1)</scope>
    <scope>TISSUE SPECIFICITY</scope>
    <scope>GENE FAMILY</scope>
    <scope>NOMENCLATURE</scope>
</reference>
<reference key="2">
    <citation type="journal article" date="2000" name="Nature">
        <title>Sequence and analysis of chromosome 3 of the plant Arabidopsis thaliana.</title>
        <authorList>
            <person name="Salanoubat M."/>
            <person name="Lemcke K."/>
            <person name="Rieger M."/>
            <person name="Ansorge W."/>
            <person name="Unseld M."/>
            <person name="Fartmann B."/>
            <person name="Valle G."/>
            <person name="Bloecker H."/>
            <person name="Perez-Alonso M."/>
            <person name="Obermaier B."/>
            <person name="Delseny M."/>
            <person name="Boutry M."/>
            <person name="Grivell L.A."/>
            <person name="Mache R."/>
            <person name="Puigdomenech P."/>
            <person name="De Simone V."/>
            <person name="Choisne N."/>
            <person name="Artiguenave F."/>
            <person name="Robert C."/>
            <person name="Brottier P."/>
            <person name="Wincker P."/>
            <person name="Cattolico L."/>
            <person name="Weissenbach J."/>
            <person name="Saurin W."/>
            <person name="Quetier F."/>
            <person name="Schaefer M."/>
            <person name="Mueller-Auer S."/>
            <person name="Gabel C."/>
            <person name="Fuchs M."/>
            <person name="Benes V."/>
            <person name="Wurmbach E."/>
            <person name="Drzonek H."/>
            <person name="Erfle H."/>
            <person name="Jordan N."/>
            <person name="Bangert S."/>
            <person name="Wiedelmann R."/>
            <person name="Kranz H."/>
            <person name="Voss H."/>
            <person name="Holland R."/>
            <person name="Brandt P."/>
            <person name="Nyakatura G."/>
            <person name="Vezzi A."/>
            <person name="D'Angelo M."/>
            <person name="Pallavicini A."/>
            <person name="Toppo S."/>
            <person name="Simionati B."/>
            <person name="Conrad A."/>
            <person name="Hornischer K."/>
            <person name="Kauer G."/>
            <person name="Loehnert T.-H."/>
            <person name="Nordsiek G."/>
            <person name="Reichelt J."/>
            <person name="Scharfe M."/>
            <person name="Schoen O."/>
            <person name="Bargues M."/>
            <person name="Terol J."/>
            <person name="Climent J."/>
            <person name="Navarro P."/>
            <person name="Collado C."/>
            <person name="Perez-Perez A."/>
            <person name="Ottenwaelder B."/>
            <person name="Duchemin D."/>
            <person name="Cooke R."/>
            <person name="Laudie M."/>
            <person name="Berger-Llauro C."/>
            <person name="Purnelle B."/>
            <person name="Masuy D."/>
            <person name="de Haan M."/>
            <person name="Maarse A.C."/>
            <person name="Alcaraz J.-P."/>
            <person name="Cottet A."/>
            <person name="Casacuberta E."/>
            <person name="Monfort A."/>
            <person name="Argiriou A."/>
            <person name="Flores M."/>
            <person name="Liguori R."/>
            <person name="Vitale D."/>
            <person name="Mannhaupt G."/>
            <person name="Haase D."/>
            <person name="Schoof H."/>
            <person name="Rudd S."/>
            <person name="Zaccaria P."/>
            <person name="Mewes H.-W."/>
            <person name="Mayer K.F.X."/>
            <person name="Kaul S."/>
            <person name="Town C.D."/>
            <person name="Koo H.L."/>
            <person name="Tallon L.J."/>
            <person name="Jenkins J."/>
            <person name="Rooney T."/>
            <person name="Rizzo M."/>
            <person name="Walts A."/>
            <person name="Utterback T."/>
            <person name="Fujii C.Y."/>
            <person name="Shea T.P."/>
            <person name="Creasy T.H."/>
            <person name="Haas B."/>
            <person name="Maiti R."/>
            <person name="Wu D."/>
            <person name="Peterson J."/>
            <person name="Van Aken S."/>
            <person name="Pai G."/>
            <person name="Militscher J."/>
            <person name="Sellers P."/>
            <person name="Gill J.E."/>
            <person name="Feldblyum T.V."/>
            <person name="Preuss D."/>
            <person name="Lin X."/>
            <person name="Nierman W.C."/>
            <person name="Salzberg S.L."/>
            <person name="White O."/>
            <person name="Venter J.C."/>
            <person name="Fraser C.M."/>
            <person name="Kaneko T."/>
            <person name="Nakamura Y."/>
            <person name="Sato S."/>
            <person name="Kato T."/>
            <person name="Asamizu E."/>
            <person name="Sasamoto S."/>
            <person name="Kimura T."/>
            <person name="Idesawa K."/>
            <person name="Kawashima K."/>
            <person name="Kishida Y."/>
            <person name="Kiyokawa C."/>
            <person name="Kohara M."/>
            <person name="Matsumoto M."/>
            <person name="Matsuno A."/>
            <person name="Muraki A."/>
            <person name="Nakayama S."/>
            <person name="Nakazaki N."/>
            <person name="Shinpo S."/>
            <person name="Takeuchi C."/>
            <person name="Wada T."/>
            <person name="Watanabe A."/>
            <person name="Yamada M."/>
            <person name="Yasuda M."/>
            <person name="Tabata S."/>
        </authorList>
    </citation>
    <scope>NUCLEOTIDE SEQUENCE [LARGE SCALE GENOMIC DNA]</scope>
    <source>
        <strain>cv. Columbia</strain>
    </source>
</reference>
<reference key="3">
    <citation type="journal article" date="2017" name="Plant J.">
        <title>Araport11: a complete reannotation of the Arabidopsis thaliana reference genome.</title>
        <authorList>
            <person name="Cheng C.Y."/>
            <person name="Krishnakumar V."/>
            <person name="Chan A.P."/>
            <person name="Thibaud-Nissen F."/>
            <person name="Schobel S."/>
            <person name="Town C.D."/>
        </authorList>
    </citation>
    <scope>GENOME REANNOTATION</scope>
    <source>
        <strain>cv. Columbia</strain>
    </source>
</reference>
<reference key="4">
    <citation type="submission" date="2004-09" db="EMBL/GenBank/DDBJ databases">
        <title>Large-scale analysis of RIKEN Arabidopsis full-length (RAFL) cDNAs.</title>
        <authorList>
            <person name="Totoki Y."/>
            <person name="Seki M."/>
            <person name="Ishida J."/>
            <person name="Nakajima M."/>
            <person name="Enju A."/>
            <person name="Kamiya A."/>
            <person name="Narusaka M."/>
            <person name="Shin-i T."/>
            <person name="Nakagawa M."/>
            <person name="Sakamoto N."/>
            <person name="Oishi K."/>
            <person name="Kohara Y."/>
            <person name="Kobayashi M."/>
            <person name="Toyoda A."/>
            <person name="Sakaki Y."/>
            <person name="Sakurai T."/>
            <person name="Iida K."/>
            <person name="Akiyama K."/>
            <person name="Satou M."/>
            <person name="Toyoda T."/>
            <person name="Konagaya A."/>
            <person name="Carninci P."/>
            <person name="Kawai J."/>
            <person name="Hayashizaki Y."/>
            <person name="Shinozaki K."/>
        </authorList>
    </citation>
    <scope>NUCLEOTIDE SEQUENCE [LARGE SCALE MRNA] (ISOFORM 2)</scope>
    <source>
        <strain>cv. Columbia</strain>
    </source>
</reference>
<reference key="5">
    <citation type="submission" date="2002-03" db="EMBL/GenBank/DDBJ databases">
        <title>Full-length cDNA from Arabidopsis thaliana.</title>
        <authorList>
            <person name="Brover V.V."/>
            <person name="Troukhan M.E."/>
            <person name="Alexandrov N.A."/>
            <person name="Lu Y.-P."/>
            <person name="Flavell R.B."/>
            <person name="Feldmann K.A."/>
        </authorList>
    </citation>
    <scope>NUCLEOTIDE SEQUENCE [LARGE SCALE MRNA] (ISOFORM 1)</scope>
</reference>
<reference key="6">
    <citation type="journal article" date="2004" name="Plant Physiol.">
        <title>Immunophilins and parvulins. Superfamily of peptidyl prolyl isomerases in Arabidopsis.</title>
        <authorList>
            <person name="He Z."/>
            <person name="Li L."/>
            <person name="Luan S."/>
        </authorList>
    </citation>
    <scope>GENE FAMILY</scope>
    <scope>NOMENCLATURE</scope>
</reference>
<name>CP21B_ARATH</name>
<gene>
    <name type="primary">CYP21-2</name>
    <name type="ordered locus">At3g55920</name>
    <name type="ORF">F27K19.100</name>
</gene>
<keyword id="KW-0025">Alternative splicing</keyword>
<keyword id="KW-0143">Chaperone</keyword>
<keyword id="KW-0256">Endoplasmic reticulum</keyword>
<keyword id="KW-0325">Glycoprotein</keyword>
<keyword id="KW-0413">Isomerase</keyword>
<keyword id="KW-1185">Reference proteome</keyword>
<keyword id="KW-0697">Rotamase</keyword>
<keyword id="KW-0732">Signal</keyword>